<accession>A0A1S3ZX38</accession>
<accession>O82031</accession>
<comment type="function">
    <text evidence="3">Alpha-dioxygenase that catalyzes the primary oxygenation step of a variety of 14-20 carbon fatty acids, containing up to three unsaturated bonds, into their corresponding 2R-hydroperoxides (PubMed:9724698). Involved in the production of oxylipins that function in cell signaling, wound healing, and protection from infection (PubMed:9724698).</text>
</comment>
<comment type="catalytic activity">
    <reaction evidence="3">
        <text>a 1,2-saturated fatty acid + O2 = a (2R)-2-hydroperoxy fatty acid</text>
        <dbReference type="Rhea" id="RHEA:63508"/>
        <dbReference type="ChEBI" id="CHEBI:15379"/>
        <dbReference type="ChEBI" id="CHEBI:83955"/>
        <dbReference type="ChEBI" id="CHEBI:147340"/>
        <dbReference type="EC" id="1.13.11.92"/>
    </reaction>
    <physiologicalReaction direction="left-to-right" evidence="3">
        <dbReference type="Rhea" id="RHEA:63509"/>
    </physiologicalReaction>
</comment>
<comment type="catalytic activity">
    <reaction evidence="3">
        <text>(9Z,12Z,15Z)-octadecatrienoate + O2 = (R)-2-hydroperoxy-(9Z,12Z,15Z)-octadecatrienoate</text>
        <dbReference type="Rhea" id="RHEA:16329"/>
        <dbReference type="ChEBI" id="CHEBI:15379"/>
        <dbReference type="ChEBI" id="CHEBI:32387"/>
        <dbReference type="ChEBI" id="CHEBI:76161"/>
        <dbReference type="EC" id="1.13.11.92"/>
    </reaction>
    <physiologicalReaction direction="left-to-right" evidence="3">
        <dbReference type="Rhea" id="RHEA:16330"/>
    </physiologicalReaction>
</comment>
<comment type="catalytic activity">
    <reaction evidence="3">
        <text>(9Z,12Z)-octadecadienoate + O2 = (2R,9Z,12Z)-2-hydroperoxyoctadecadienoate</text>
        <dbReference type="Rhea" id="RHEA:63860"/>
        <dbReference type="ChEBI" id="CHEBI:15379"/>
        <dbReference type="ChEBI" id="CHEBI:30245"/>
        <dbReference type="ChEBI" id="CHEBI:149618"/>
        <dbReference type="EC" id="1.13.11.92"/>
    </reaction>
    <physiologicalReaction direction="left-to-right" evidence="3">
        <dbReference type="Rhea" id="RHEA:63861"/>
    </physiologicalReaction>
</comment>
<comment type="cofactor">
    <cofactor evidence="1">
        <name>heme b</name>
        <dbReference type="ChEBI" id="CHEBI:60344"/>
    </cofactor>
    <text evidence="1">Binds 1 heme b (iron(II)-protoporphyrin IX) group per subunit.</text>
</comment>
<comment type="cofactor">
    <cofactor evidence="1">
        <name>Ca(2+)</name>
        <dbReference type="ChEBI" id="CHEBI:29108"/>
    </cofactor>
    <text evidence="1">Binds 1 calcium ion per subunit.</text>
</comment>
<comment type="induction">
    <text evidence="3">Induced by the elicitor harpin (HrpN) from Erwinia amylovora and infection with E.amylovora (PubMed:9724698). Induced by infection with the bacterial pathogens Pseudomonas syringae pv syringae and Pseudomonas syringae pv tabaci (PubMed:9724698). Induced by salicylate (SA), wounding, jasmonate (JA), paraquat and 3-amino-1,2,4-triazole (3AT) (PubMed:9724698).</text>
</comment>
<comment type="similarity">
    <text evidence="2">Belongs to the peroxidase family.</text>
</comment>
<dbReference type="EC" id="1.13.11.92" evidence="3"/>
<dbReference type="EMBL" id="AJ007630">
    <property type="protein sequence ID" value="CAA07589.1"/>
    <property type="molecule type" value="mRNA"/>
</dbReference>
<dbReference type="PIR" id="T03631">
    <property type="entry name" value="T03631"/>
</dbReference>
<dbReference type="RefSeq" id="XP_016468957.1">
    <property type="nucleotide sequence ID" value="XM_016613471.1"/>
</dbReference>
<dbReference type="SMR" id="A0A1S3ZX38"/>
<dbReference type="STRING" id="4097.A0A1S3ZX38"/>
<dbReference type="PeroxiBase" id="4117">
    <property type="entry name" value="NtDiOx01-1A"/>
</dbReference>
<dbReference type="PaxDb" id="4097-A0A1S3ZX38"/>
<dbReference type="KEGG" id="nta:107791409"/>
<dbReference type="OMA" id="MARVRTY"/>
<dbReference type="OrthoDB" id="823504at2759"/>
<dbReference type="BRENDA" id="1.13.11.92">
    <property type="organism ID" value="3645"/>
</dbReference>
<dbReference type="Proteomes" id="UP000084051">
    <property type="component" value="Unplaced"/>
</dbReference>
<dbReference type="GO" id="GO:0020037">
    <property type="term" value="F:heme binding"/>
    <property type="evidence" value="ECO:0007669"/>
    <property type="project" value="InterPro"/>
</dbReference>
<dbReference type="GO" id="GO:0046872">
    <property type="term" value="F:metal ion binding"/>
    <property type="evidence" value="ECO:0007669"/>
    <property type="project" value="UniProtKB-KW"/>
</dbReference>
<dbReference type="GO" id="GO:0016702">
    <property type="term" value="F:oxidoreductase activity, acting on single donors with incorporation of molecular oxygen, incorporation of two atoms of oxygen"/>
    <property type="evidence" value="ECO:0000318"/>
    <property type="project" value="GO_Central"/>
</dbReference>
<dbReference type="GO" id="GO:0004601">
    <property type="term" value="F:peroxidase activity"/>
    <property type="evidence" value="ECO:0007669"/>
    <property type="project" value="UniProtKB-KW"/>
</dbReference>
<dbReference type="GO" id="GO:0006952">
    <property type="term" value="P:defense response"/>
    <property type="evidence" value="ECO:0007669"/>
    <property type="project" value="UniProtKB-KW"/>
</dbReference>
<dbReference type="GO" id="GO:0006633">
    <property type="term" value="P:fatty acid biosynthetic process"/>
    <property type="evidence" value="ECO:0007669"/>
    <property type="project" value="UniProtKB-KW"/>
</dbReference>
<dbReference type="GO" id="GO:0031408">
    <property type="term" value="P:oxylipin biosynthetic process"/>
    <property type="evidence" value="ECO:0007669"/>
    <property type="project" value="UniProtKB-KW"/>
</dbReference>
<dbReference type="GO" id="GO:0006979">
    <property type="term" value="P:response to oxidative stress"/>
    <property type="evidence" value="ECO:0007669"/>
    <property type="project" value="InterPro"/>
</dbReference>
<dbReference type="CDD" id="cd09818">
    <property type="entry name" value="PIOX_like"/>
    <property type="match status" value="1"/>
</dbReference>
<dbReference type="Gene3D" id="1.10.640.10">
    <property type="entry name" value="Haem peroxidase domain superfamily, animal type"/>
    <property type="match status" value="1"/>
</dbReference>
<dbReference type="InterPro" id="IPR034815">
    <property type="entry name" value="A_dioxygenase"/>
</dbReference>
<dbReference type="InterPro" id="IPR019791">
    <property type="entry name" value="Haem_peroxidase_animal"/>
</dbReference>
<dbReference type="InterPro" id="IPR010255">
    <property type="entry name" value="Haem_peroxidase_sf"/>
</dbReference>
<dbReference type="InterPro" id="IPR037120">
    <property type="entry name" value="Haem_peroxidase_sf_animal"/>
</dbReference>
<dbReference type="InterPro" id="IPR050783">
    <property type="entry name" value="Oxylipin_biosynth_metab"/>
</dbReference>
<dbReference type="PANTHER" id="PTHR11903:SF11">
    <property type="entry name" value="ALPHA-DIOXYGENASE 1"/>
    <property type="match status" value="1"/>
</dbReference>
<dbReference type="PANTHER" id="PTHR11903">
    <property type="entry name" value="PROSTAGLANDIN G/H SYNTHASE"/>
    <property type="match status" value="1"/>
</dbReference>
<dbReference type="Pfam" id="PF03098">
    <property type="entry name" value="An_peroxidase"/>
    <property type="match status" value="1"/>
</dbReference>
<dbReference type="SUPFAM" id="SSF48113">
    <property type="entry name" value="Heme-dependent peroxidases"/>
    <property type="match status" value="1"/>
</dbReference>
<dbReference type="PROSITE" id="PS50292">
    <property type="entry name" value="PEROXIDASE_3"/>
    <property type="match status" value="1"/>
</dbReference>
<organism>
    <name type="scientific">Nicotiana tabacum</name>
    <name type="common">Common tobacco</name>
    <dbReference type="NCBI Taxonomy" id="4097"/>
    <lineage>
        <taxon>Eukaryota</taxon>
        <taxon>Viridiplantae</taxon>
        <taxon>Streptophyta</taxon>
        <taxon>Embryophyta</taxon>
        <taxon>Tracheophyta</taxon>
        <taxon>Spermatophyta</taxon>
        <taxon>Magnoliopsida</taxon>
        <taxon>eudicotyledons</taxon>
        <taxon>Gunneridae</taxon>
        <taxon>Pentapetalae</taxon>
        <taxon>asterids</taxon>
        <taxon>lamiids</taxon>
        <taxon>Solanales</taxon>
        <taxon>Solanaceae</taxon>
        <taxon>Nicotianoideae</taxon>
        <taxon>Nicotianeae</taxon>
        <taxon>Nicotiana</taxon>
    </lineage>
</organism>
<protein>
    <recommendedName>
        <fullName evidence="5">Alpha-dioxygenase PIOX</fullName>
        <ecNumber evidence="3">1.13.11.92</ecNumber>
    </recommendedName>
    <alternativeName>
        <fullName evidence="4">Pathogen-induced oxygenase</fullName>
    </alternativeName>
</protein>
<reference key="1">
    <citation type="journal article" date="1998" name="Plant Cell">
        <title>PIOX, a new pathogen-induced oxygenase with homology to animal cyclooxygenase.</title>
        <authorList>
            <person name="Sanz A."/>
            <person name="Moreno J.I."/>
            <person name="Castresana C."/>
        </authorList>
    </citation>
    <scope>NUCLEOTIDE SEQUENCE [MRNA]</scope>
    <scope>FUNCTION</scope>
    <scope>CATALYTIC ACTIVITY</scope>
    <scope>INDUCTION</scope>
</reference>
<reference key="2">
    <citation type="journal article" date="2014" name="Nat. Commun.">
        <title>The tobacco genome sequence and its comparison with those of tomato and potato.</title>
        <authorList>
            <person name="Sierro N."/>
            <person name="Battey J.N."/>
            <person name="Ouadi S."/>
            <person name="Bakaher N."/>
            <person name="Bovet L."/>
            <person name="Willig A."/>
            <person name="Goepfert S."/>
            <person name="Peitsch M.C."/>
            <person name="Ivanov N.V."/>
        </authorList>
    </citation>
    <scope>NUCLEOTIDE SEQUENCE [LARGE SCALE GENOMIC DNA]</scope>
    <source>
        <strain>cv. TN90</strain>
    </source>
</reference>
<name>PIOX_TOBAC</name>
<feature type="chain" id="PRO_0000455381" description="Alpha-dioxygenase PIOX">
    <location>
        <begin position="1"/>
        <end position="643"/>
    </location>
</feature>
<feature type="active site" description="Proton acceptor" evidence="2">
    <location>
        <position position="167"/>
    </location>
</feature>
<feature type="binding site" evidence="1">
    <location>
        <position position="168"/>
    </location>
    <ligand>
        <name>Ca(2+)</name>
        <dbReference type="ChEBI" id="CHEBI:29108"/>
    </ligand>
</feature>
<feature type="binding site" evidence="1">
    <location>
        <position position="172"/>
    </location>
    <ligand>
        <name>heme b</name>
        <dbReference type="ChEBI" id="CHEBI:60344"/>
    </ligand>
</feature>
<feature type="binding site" evidence="1">
    <location>
        <position position="220"/>
    </location>
    <ligand>
        <name>Ca(2+)</name>
        <dbReference type="ChEBI" id="CHEBI:29108"/>
    </ligand>
</feature>
<feature type="binding site" evidence="1">
    <location>
        <position position="222"/>
    </location>
    <ligand>
        <name>Ca(2+)</name>
        <dbReference type="ChEBI" id="CHEBI:29108"/>
    </ligand>
</feature>
<feature type="binding site" evidence="1">
    <location>
        <position position="224"/>
    </location>
    <ligand>
        <name>Ca(2+)</name>
        <dbReference type="ChEBI" id="CHEBI:29108"/>
    </ligand>
</feature>
<feature type="binding site" evidence="1">
    <location>
        <position position="226"/>
    </location>
    <ligand>
        <name>Ca(2+)</name>
        <dbReference type="ChEBI" id="CHEBI:29108"/>
    </ligand>
</feature>
<feature type="binding site" description="axial binding residue" evidence="2">
    <location>
        <position position="392"/>
    </location>
    <ligand>
        <name>heme b</name>
        <dbReference type="ChEBI" id="CHEBI:60344"/>
    </ligand>
    <ligandPart>
        <name>Fe</name>
        <dbReference type="ChEBI" id="CHEBI:18248"/>
    </ligandPart>
</feature>
<feature type="binding site" evidence="1">
    <location>
        <position position="489"/>
    </location>
    <ligand>
        <name>heme b</name>
        <dbReference type="ChEBI" id="CHEBI:60344"/>
    </ligand>
</feature>
<feature type="binding site" evidence="1">
    <location>
        <position position="493"/>
    </location>
    <ligand>
        <name>heme b</name>
        <dbReference type="ChEBI" id="CHEBI:60344"/>
    </ligand>
</feature>
<feature type="site" description="Transition state stabilizer" evidence="2">
    <location>
        <position position="269"/>
    </location>
</feature>
<feature type="sequence conflict" description="In Ref. 1; CAA07589." evidence="5" ref="1">
    <original>F</original>
    <variation>L</variation>
    <location>
        <position position="24"/>
    </location>
</feature>
<feature type="sequence conflict" description="In Ref. 1; CAA07589." evidence="5" ref="1">
    <original>K</original>
    <variation>R</variation>
    <location>
        <position position="197"/>
    </location>
</feature>
<feature type="sequence conflict" description="In Ref. 1; CAA07589." evidence="5" ref="1">
    <original>E</original>
    <variation>K</variation>
    <location>
        <position position="432"/>
    </location>
</feature>
<proteinExistence type="evidence at protein level"/>
<keyword id="KW-0106">Calcium</keyword>
<keyword id="KW-0223">Dioxygenase</keyword>
<keyword id="KW-0275">Fatty acid biosynthesis</keyword>
<keyword id="KW-0276">Fatty acid metabolism</keyword>
<keyword id="KW-0349">Heme</keyword>
<keyword id="KW-0408">Iron</keyword>
<keyword id="KW-0444">Lipid biosynthesis</keyword>
<keyword id="KW-0443">Lipid metabolism</keyword>
<keyword id="KW-0479">Metal-binding</keyword>
<keyword id="KW-0560">Oxidoreductase</keyword>
<keyword id="KW-0925">Oxylipin biosynthesis</keyword>
<keyword id="KW-0575">Peroxidase</keyword>
<keyword id="KW-0611">Plant defense</keyword>
<keyword id="KW-1185">Reference proteome</keyword>
<evidence type="ECO:0000250" key="1">
    <source>
        <dbReference type="UniProtKB" id="Q9SGH6"/>
    </source>
</evidence>
<evidence type="ECO:0000255" key="2">
    <source>
        <dbReference type="PROSITE-ProRule" id="PRU00298"/>
    </source>
</evidence>
<evidence type="ECO:0000269" key="3">
    <source>
    </source>
</evidence>
<evidence type="ECO:0000303" key="4">
    <source>
    </source>
</evidence>
<evidence type="ECO:0000305" key="5"/>
<evidence type="ECO:0000312" key="6">
    <source>
        <dbReference type="RefSeq" id="XP_016468957.1"/>
    </source>
</evidence>
<sequence length="643" mass="73453">MSLVMDSLKNLLLSPLRGFIHKDFHDIFERMTLLSKLLFLIVHLVDKLNLWHRLPVLLGLLYLGARRHLHQEYNLINVGKTPIGVRSNPADHPYRTADGKYNDPFNEGAGSELSFFGRNMLPVDQHNQLKKPDPMVVATKLLARRNFVDTGKQFNMIAASWIQFMIHDWIDHLEDTKQIELKAAEEVASQCPLKSFKFFKTKEIPTGFYEIKTGHLNTRTPWWDGSAIYGSNAEVLKKVRTFKDGKLKLSADGLLEIDKNGKIISGDVRNTWAGLSALQALFVQEHNSVCDALKKEYPELEEEDLYRHARLVTSAVIAKVHTIDWTVELLKTDTLLAGMRANWYGLLGKKFKDTFGHVGGSILGGFVGMKKPENYGVPYSLTEEFTSVYRMHQLLPDKLQLRNIDATPGPNKSLPLTNEIPLEDLIGGKGEENLSKIGFTKQMVSMGHQACGALELWNYPVWMRDLIPQDVDGTDRPDHIDLAALEIYRDRERSVARYNEFRRGMLQIPISKWEDLTDDEEVINTLGEVYGDDVEELDLMVGMAAEKKIKGFAISETAFFIFLVMASRRLEADRFFTSNYNEETYTKKGLEWVNTTESLKDVLDRHYPEITEKWMNSSSAFSVWDSTPQPHNPIPLYFRVPPQ</sequence>
<gene>
    <name evidence="4" type="primary">PIOX</name>
    <name evidence="6" type="ORF">LOC107791409</name>
</gene>